<keyword id="KW-0067">ATP-binding</keyword>
<keyword id="KW-0319">Glycerol metabolism</keyword>
<keyword id="KW-0418">Kinase</keyword>
<keyword id="KW-0547">Nucleotide-binding</keyword>
<keyword id="KW-0597">Phosphoprotein</keyword>
<keyword id="KW-0808">Transferase</keyword>
<sequence>MEKKYILALDQGTTSSRAMIIDEEGEVIGVAQEEFDQIFPKPGWVEHNANEIWASILAVIAGVLLKTNISSKEIAGIGITNQRETTVIWDKESGNPIYNAIVWQSRQTEDICKQLRKDGYEDTIRSKTGLLIDPYFAGTKARWILDHVDGAQERAEKGELLFGTIDTWLVWKLTGGRAHITDYSNASRTLLYNIYDLEWDDELLKMLNIPKAMLPEVRPSSEVYADTVPYHFFGEEVPVAGIAGDQQAALFGQGCFEKGMAKNTYGTGCFLLMNTGEKAVRSENGLLTTLAWGIDGKVEYALEGSIFVAGSAIQWLRDGLRMVRQSSDSENYASRIESSDGVYVVPAFVGLGAPYWDSDVRGAVFGLTRGTEKEQFIRATLESLAYQTRDVLYAMEQDSGISLKTLRVDGGASANNFLMQFQSDILGVPVERPENKETTVLGAAFLAGLAVGVWKDKNEIKKHWKLDKRFEVEMKDEQREDLYEGWHKAVKAAQAFK</sequence>
<feature type="chain" id="PRO_0000059464" description="Glycerol kinase">
    <location>
        <begin position="1"/>
        <end position="497"/>
    </location>
</feature>
<feature type="binding site" evidence="1">
    <location>
        <position position="13"/>
    </location>
    <ligand>
        <name>ADP</name>
        <dbReference type="ChEBI" id="CHEBI:456216"/>
    </ligand>
</feature>
<feature type="binding site" evidence="1">
    <location>
        <position position="13"/>
    </location>
    <ligand>
        <name>ATP</name>
        <dbReference type="ChEBI" id="CHEBI:30616"/>
    </ligand>
</feature>
<feature type="binding site" evidence="1">
    <location>
        <position position="13"/>
    </location>
    <ligand>
        <name>sn-glycerol 3-phosphate</name>
        <dbReference type="ChEBI" id="CHEBI:57597"/>
    </ligand>
</feature>
<feature type="binding site" evidence="1">
    <location>
        <position position="14"/>
    </location>
    <ligand>
        <name>ATP</name>
        <dbReference type="ChEBI" id="CHEBI:30616"/>
    </ligand>
</feature>
<feature type="binding site" evidence="1">
    <location>
        <position position="15"/>
    </location>
    <ligand>
        <name>ATP</name>
        <dbReference type="ChEBI" id="CHEBI:30616"/>
    </ligand>
</feature>
<feature type="binding site" evidence="1">
    <location>
        <position position="17"/>
    </location>
    <ligand>
        <name>ADP</name>
        <dbReference type="ChEBI" id="CHEBI:456216"/>
    </ligand>
</feature>
<feature type="binding site" evidence="1">
    <location>
        <position position="83"/>
    </location>
    <ligand>
        <name>glycerol</name>
        <dbReference type="ChEBI" id="CHEBI:17754"/>
    </ligand>
</feature>
<feature type="binding site" evidence="1">
    <location>
        <position position="83"/>
    </location>
    <ligand>
        <name>sn-glycerol 3-phosphate</name>
        <dbReference type="ChEBI" id="CHEBI:57597"/>
    </ligand>
</feature>
<feature type="binding site" evidence="1">
    <location>
        <position position="84"/>
    </location>
    <ligand>
        <name>glycerol</name>
        <dbReference type="ChEBI" id="CHEBI:17754"/>
    </ligand>
</feature>
<feature type="binding site" evidence="1">
    <location>
        <position position="84"/>
    </location>
    <ligand>
        <name>sn-glycerol 3-phosphate</name>
        <dbReference type="ChEBI" id="CHEBI:57597"/>
    </ligand>
</feature>
<feature type="binding site" evidence="1">
    <location>
        <position position="135"/>
    </location>
    <ligand>
        <name>glycerol</name>
        <dbReference type="ChEBI" id="CHEBI:17754"/>
    </ligand>
</feature>
<feature type="binding site" evidence="1">
    <location>
        <position position="135"/>
    </location>
    <ligand>
        <name>sn-glycerol 3-phosphate</name>
        <dbReference type="ChEBI" id="CHEBI:57597"/>
    </ligand>
</feature>
<feature type="binding site" evidence="1">
    <location>
        <position position="245"/>
    </location>
    <ligand>
        <name>glycerol</name>
        <dbReference type="ChEBI" id="CHEBI:17754"/>
    </ligand>
</feature>
<feature type="binding site" evidence="1">
    <location>
        <position position="245"/>
    </location>
    <ligand>
        <name>sn-glycerol 3-phosphate</name>
        <dbReference type="ChEBI" id="CHEBI:57597"/>
    </ligand>
</feature>
<feature type="binding site" evidence="1">
    <location>
        <position position="246"/>
    </location>
    <ligand>
        <name>glycerol</name>
        <dbReference type="ChEBI" id="CHEBI:17754"/>
    </ligand>
</feature>
<feature type="binding site" evidence="1">
    <location>
        <position position="267"/>
    </location>
    <ligand>
        <name>ADP</name>
        <dbReference type="ChEBI" id="CHEBI:456216"/>
    </ligand>
</feature>
<feature type="binding site" evidence="1">
    <location>
        <position position="267"/>
    </location>
    <ligand>
        <name>ATP</name>
        <dbReference type="ChEBI" id="CHEBI:30616"/>
    </ligand>
</feature>
<feature type="binding site" evidence="1">
    <location>
        <position position="310"/>
    </location>
    <ligand>
        <name>ADP</name>
        <dbReference type="ChEBI" id="CHEBI:456216"/>
    </ligand>
</feature>
<feature type="binding site" evidence="1">
    <location>
        <position position="310"/>
    </location>
    <ligand>
        <name>ATP</name>
        <dbReference type="ChEBI" id="CHEBI:30616"/>
    </ligand>
</feature>
<feature type="binding site" evidence="1">
    <location>
        <position position="314"/>
    </location>
    <ligand>
        <name>ATP</name>
        <dbReference type="ChEBI" id="CHEBI:30616"/>
    </ligand>
</feature>
<feature type="binding site" evidence="1">
    <location>
        <position position="411"/>
    </location>
    <ligand>
        <name>ADP</name>
        <dbReference type="ChEBI" id="CHEBI:456216"/>
    </ligand>
</feature>
<feature type="binding site" evidence="1">
    <location>
        <position position="411"/>
    </location>
    <ligand>
        <name>ATP</name>
        <dbReference type="ChEBI" id="CHEBI:30616"/>
    </ligand>
</feature>
<feature type="binding site" evidence="1">
    <location>
        <position position="415"/>
    </location>
    <ligand>
        <name>ADP</name>
        <dbReference type="ChEBI" id="CHEBI:456216"/>
    </ligand>
</feature>
<feature type="modified residue" description="Phosphohistidine; by HPr" evidence="1">
    <location>
        <position position="231"/>
    </location>
</feature>
<gene>
    <name evidence="1" type="primary">glpK</name>
    <name type="ordered locus">LMOf2365_1557</name>
</gene>
<protein>
    <recommendedName>
        <fullName evidence="1">Glycerol kinase</fullName>
        <ecNumber evidence="1">2.7.1.30</ecNumber>
    </recommendedName>
    <alternativeName>
        <fullName evidence="1">ATP:glycerol 3-phosphotransferase</fullName>
    </alternativeName>
    <alternativeName>
        <fullName evidence="1">Glycerokinase</fullName>
        <shortName evidence="1">GK</shortName>
    </alternativeName>
</protein>
<proteinExistence type="inferred from homology"/>
<reference key="1">
    <citation type="journal article" date="2004" name="Nucleic Acids Res.">
        <title>Whole genome comparisons of serotype 4b and 1/2a strains of the food-borne pathogen Listeria monocytogenes reveal new insights into the core genome components of this species.</title>
        <authorList>
            <person name="Nelson K.E."/>
            <person name="Fouts D.E."/>
            <person name="Mongodin E.F."/>
            <person name="Ravel J."/>
            <person name="DeBoy R.T."/>
            <person name="Kolonay J.F."/>
            <person name="Rasko D.A."/>
            <person name="Angiuoli S.V."/>
            <person name="Gill S.R."/>
            <person name="Paulsen I.T."/>
            <person name="Peterson J.D."/>
            <person name="White O."/>
            <person name="Nelson W.C."/>
            <person name="Nierman W.C."/>
            <person name="Beanan M.J."/>
            <person name="Brinkac L.M."/>
            <person name="Daugherty S.C."/>
            <person name="Dodson R.J."/>
            <person name="Durkin A.S."/>
            <person name="Madupu R."/>
            <person name="Haft D.H."/>
            <person name="Selengut J."/>
            <person name="Van Aken S.E."/>
            <person name="Khouri H.M."/>
            <person name="Fedorova N."/>
            <person name="Forberger H.A."/>
            <person name="Tran B."/>
            <person name="Kathariou S."/>
            <person name="Wonderling L.D."/>
            <person name="Uhlich G.A."/>
            <person name="Bayles D.O."/>
            <person name="Luchansky J.B."/>
            <person name="Fraser C.M."/>
        </authorList>
    </citation>
    <scope>NUCLEOTIDE SEQUENCE [LARGE SCALE GENOMIC DNA]</scope>
    <source>
        <strain>F2365</strain>
    </source>
</reference>
<comment type="function">
    <text evidence="1">Key enzyme in the regulation of glycerol uptake and metabolism. Catalyzes the phosphorylation of glycerol to yield sn-glycerol 3-phosphate.</text>
</comment>
<comment type="catalytic activity">
    <reaction evidence="1">
        <text>glycerol + ATP = sn-glycerol 3-phosphate + ADP + H(+)</text>
        <dbReference type="Rhea" id="RHEA:21644"/>
        <dbReference type="ChEBI" id="CHEBI:15378"/>
        <dbReference type="ChEBI" id="CHEBI:17754"/>
        <dbReference type="ChEBI" id="CHEBI:30616"/>
        <dbReference type="ChEBI" id="CHEBI:57597"/>
        <dbReference type="ChEBI" id="CHEBI:456216"/>
        <dbReference type="EC" id="2.7.1.30"/>
    </reaction>
</comment>
<comment type="activity regulation">
    <text evidence="1">Activated by phosphorylation and inhibited by fructose 1,6-bisphosphate (FBP).</text>
</comment>
<comment type="pathway">
    <text evidence="1">Polyol metabolism; glycerol degradation via glycerol kinase pathway; sn-glycerol 3-phosphate from glycerol: step 1/1.</text>
</comment>
<comment type="subunit">
    <text evidence="1">Homotetramer and homodimer (in equilibrium).</text>
</comment>
<comment type="PTM">
    <text evidence="1">The phosphoenolpyruvate-dependent sugar phosphotransferase system (PTS), including enzyme I, and histidine-containing protein (HPr) are required for the phosphorylation, which leads to the activation of the enzyme.</text>
</comment>
<comment type="similarity">
    <text evidence="1">Belongs to the FGGY kinase family.</text>
</comment>
<evidence type="ECO:0000255" key="1">
    <source>
        <dbReference type="HAMAP-Rule" id="MF_00186"/>
    </source>
</evidence>
<accession>Q71ZD2</accession>
<dbReference type="EC" id="2.7.1.30" evidence="1"/>
<dbReference type="EMBL" id="AE017262">
    <property type="protein sequence ID" value="AAT04332.1"/>
    <property type="molecule type" value="Genomic_DNA"/>
</dbReference>
<dbReference type="RefSeq" id="WP_003726648.1">
    <property type="nucleotide sequence ID" value="NC_002973.6"/>
</dbReference>
<dbReference type="SMR" id="Q71ZD2"/>
<dbReference type="KEGG" id="lmf:LMOf2365_1557"/>
<dbReference type="HOGENOM" id="CLU_009281_2_3_9"/>
<dbReference type="UniPathway" id="UPA00618">
    <property type="reaction ID" value="UER00672"/>
</dbReference>
<dbReference type="GO" id="GO:0005829">
    <property type="term" value="C:cytosol"/>
    <property type="evidence" value="ECO:0007669"/>
    <property type="project" value="TreeGrafter"/>
</dbReference>
<dbReference type="GO" id="GO:0005524">
    <property type="term" value="F:ATP binding"/>
    <property type="evidence" value="ECO:0007669"/>
    <property type="project" value="UniProtKB-UniRule"/>
</dbReference>
<dbReference type="GO" id="GO:0004370">
    <property type="term" value="F:glycerol kinase activity"/>
    <property type="evidence" value="ECO:0000250"/>
    <property type="project" value="UniProtKB"/>
</dbReference>
<dbReference type="GO" id="GO:0019563">
    <property type="term" value="P:glycerol catabolic process"/>
    <property type="evidence" value="ECO:0007669"/>
    <property type="project" value="UniProtKB-UniRule"/>
</dbReference>
<dbReference type="GO" id="GO:0006071">
    <property type="term" value="P:glycerol metabolic process"/>
    <property type="evidence" value="ECO:0000250"/>
    <property type="project" value="UniProtKB"/>
</dbReference>
<dbReference type="GO" id="GO:0006072">
    <property type="term" value="P:glycerol-3-phosphate metabolic process"/>
    <property type="evidence" value="ECO:0007669"/>
    <property type="project" value="InterPro"/>
</dbReference>
<dbReference type="CDD" id="cd07786">
    <property type="entry name" value="FGGY_EcGK_like"/>
    <property type="match status" value="1"/>
</dbReference>
<dbReference type="FunFam" id="3.30.420.40:FF:000007">
    <property type="entry name" value="Glycerol kinase"/>
    <property type="match status" value="1"/>
</dbReference>
<dbReference type="FunFam" id="3.30.420.40:FF:000008">
    <property type="entry name" value="Glycerol kinase"/>
    <property type="match status" value="1"/>
</dbReference>
<dbReference type="Gene3D" id="3.30.420.40">
    <property type="match status" value="2"/>
</dbReference>
<dbReference type="HAMAP" id="MF_00186">
    <property type="entry name" value="Glycerol_kin"/>
    <property type="match status" value="1"/>
</dbReference>
<dbReference type="InterPro" id="IPR043129">
    <property type="entry name" value="ATPase_NBD"/>
</dbReference>
<dbReference type="InterPro" id="IPR000577">
    <property type="entry name" value="Carb_kinase_FGGY"/>
</dbReference>
<dbReference type="InterPro" id="IPR018483">
    <property type="entry name" value="Carb_kinase_FGGY_CS"/>
</dbReference>
<dbReference type="InterPro" id="IPR018485">
    <property type="entry name" value="FGGY_C"/>
</dbReference>
<dbReference type="InterPro" id="IPR018484">
    <property type="entry name" value="FGGY_N"/>
</dbReference>
<dbReference type="InterPro" id="IPR005999">
    <property type="entry name" value="Glycerol_kin"/>
</dbReference>
<dbReference type="NCBIfam" id="TIGR01311">
    <property type="entry name" value="glycerol_kin"/>
    <property type="match status" value="1"/>
</dbReference>
<dbReference type="NCBIfam" id="NF000756">
    <property type="entry name" value="PRK00047.1"/>
    <property type="match status" value="1"/>
</dbReference>
<dbReference type="PANTHER" id="PTHR10196:SF69">
    <property type="entry name" value="GLYCEROL KINASE"/>
    <property type="match status" value="1"/>
</dbReference>
<dbReference type="PANTHER" id="PTHR10196">
    <property type="entry name" value="SUGAR KINASE"/>
    <property type="match status" value="1"/>
</dbReference>
<dbReference type="Pfam" id="PF02782">
    <property type="entry name" value="FGGY_C"/>
    <property type="match status" value="1"/>
</dbReference>
<dbReference type="Pfam" id="PF00370">
    <property type="entry name" value="FGGY_N"/>
    <property type="match status" value="1"/>
</dbReference>
<dbReference type="PIRSF" id="PIRSF000538">
    <property type="entry name" value="GlpK"/>
    <property type="match status" value="1"/>
</dbReference>
<dbReference type="SUPFAM" id="SSF53067">
    <property type="entry name" value="Actin-like ATPase domain"/>
    <property type="match status" value="2"/>
</dbReference>
<dbReference type="PROSITE" id="PS00445">
    <property type="entry name" value="FGGY_KINASES_2"/>
    <property type="match status" value="1"/>
</dbReference>
<organism>
    <name type="scientific">Listeria monocytogenes serotype 4b (strain F2365)</name>
    <dbReference type="NCBI Taxonomy" id="265669"/>
    <lineage>
        <taxon>Bacteria</taxon>
        <taxon>Bacillati</taxon>
        <taxon>Bacillota</taxon>
        <taxon>Bacilli</taxon>
        <taxon>Bacillales</taxon>
        <taxon>Listeriaceae</taxon>
        <taxon>Listeria</taxon>
    </lineage>
</organism>
<name>GLPK_LISMF</name>